<proteinExistence type="evidence at transcript level"/>
<accession>Q9FUG4</accession>
<accession>Q9FN64</accession>
<organism>
    <name type="scientific">Arabidopsis thaliana</name>
    <name type="common">Mouse-ear cress</name>
    <dbReference type="NCBI Taxonomy" id="3702"/>
    <lineage>
        <taxon>Eukaryota</taxon>
        <taxon>Viridiplantae</taxon>
        <taxon>Streptophyta</taxon>
        <taxon>Embryophyta</taxon>
        <taxon>Tracheophyta</taxon>
        <taxon>Spermatophyta</taxon>
        <taxon>Magnoliopsida</taxon>
        <taxon>eudicotyledons</taxon>
        <taxon>Gunneridae</taxon>
        <taxon>Pentapetalae</taxon>
        <taxon>rosids</taxon>
        <taxon>malvids</taxon>
        <taxon>Brassicales</taxon>
        <taxon>Brassicaceae</taxon>
        <taxon>Camelineae</taxon>
        <taxon>Arabidopsis</taxon>
    </lineage>
</organism>
<gene>
    <name type="primary">XPB2</name>
    <name type="ordered locus">At5g41360</name>
    <name type="ORF">MYC6.7</name>
</gene>
<protein>
    <recommendedName>
        <fullName>General transcription and DNA repair factor IIH helicase/translocase subunit XPB2</fullName>
        <shortName>TFIIH subunit XPB</shortName>
        <ecNumber evidence="7">5.6.2.4</ecNumber>
    </recommendedName>
    <alternativeName>
        <fullName evidence="7">DNA 3'-5' helicase/translocase XPB2</fullName>
    </alternativeName>
    <alternativeName>
        <fullName>ERCC3 homolog 2</fullName>
    </alternativeName>
    <alternativeName>
        <fullName>RAD25 homolog 2</fullName>
        <shortName>AtXPB2</shortName>
    </alternativeName>
    <alternativeName>
        <fullName>XPB homolog 2</fullName>
    </alternativeName>
</protein>
<dbReference type="EC" id="5.6.2.4" evidence="7"/>
<dbReference type="EMBL" id="AF308595">
    <property type="protein sequence ID" value="AAG27465.1"/>
    <property type="molecule type" value="mRNA"/>
</dbReference>
<dbReference type="EMBL" id="AY550923">
    <property type="protein sequence ID" value="AAT36214.1"/>
    <property type="molecule type" value="Genomic_DNA"/>
</dbReference>
<dbReference type="EMBL" id="AB006707">
    <property type="protein sequence ID" value="BAB08508.1"/>
    <property type="status" value="ALT_SEQ"/>
    <property type="molecule type" value="Genomic_DNA"/>
</dbReference>
<dbReference type="EMBL" id="CP002688">
    <property type="protein sequence ID" value="AED94669.1"/>
    <property type="molecule type" value="Genomic_DNA"/>
</dbReference>
<dbReference type="PIR" id="S71206">
    <property type="entry name" value="S71206"/>
</dbReference>
<dbReference type="RefSeq" id="NP_568591.1">
    <property type="nucleotide sequence ID" value="NM_123501.3"/>
</dbReference>
<dbReference type="SMR" id="Q9FUG4"/>
<dbReference type="BioGRID" id="19389">
    <property type="interactions" value="1"/>
</dbReference>
<dbReference type="FunCoup" id="Q9FUG4">
    <property type="interactions" value="4197"/>
</dbReference>
<dbReference type="STRING" id="3702.Q9FUG4"/>
<dbReference type="PaxDb" id="3702-AT5G41360.1"/>
<dbReference type="ProteomicsDB" id="242792"/>
<dbReference type="EnsemblPlants" id="AT5G41360.1">
    <property type="protein sequence ID" value="AT5G41360.1"/>
    <property type="gene ID" value="AT5G41360"/>
</dbReference>
<dbReference type="GeneID" id="834138"/>
<dbReference type="Gramene" id="AT5G41360.1">
    <property type="protein sequence ID" value="AT5G41360.1"/>
    <property type="gene ID" value="AT5G41360"/>
</dbReference>
<dbReference type="KEGG" id="ath:AT5G41360"/>
<dbReference type="Araport" id="AT5G41360"/>
<dbReference type="TAIR" id="AT5G41360">
    <property type="gene designation" value="XPB2"/>
</dbReference>
<dbReference type="eggNOG" id="KOG1123">
    <property type="taxonomic scope" value="Eukaryota"/>
</dbReference>
<dbReference type="HOGENOM" id="CLU_008213_0_0_1"/>
<dbReference type="InParanoid" id="Q9FUG4"/>
<dbReference type="PhylomeDB" id="Q9FUG4"/>
<dbReference type="PRO" id="PR:Q9FUG4"/>
<dbReference type="Proteomes" id="UP000006548">
    <property type="component" value="Chromosome 5"/>
</dbReference>
<dbReference type="ExpressionAtlas" id="Q9FUG4">
    <property type="expression patterns" value="baseline and differential"/>
</dbReference>
<dbReference type="GO" id="GO:0005634">
    <property type="term" value="C:nucleus"/>
    <property type="evidence" value="ECO:0007669"/>
    <property type="project" value="UniProtKB-SubCell"/>
</dbReference>
<dbReference type="GO" id="GO:0005524">
    <property type="term" value="F:ATP binding"/>
    <property type="evidence" value="ECO:0007669"/>
    <property type="project" value="UniProtKB-KW"/>
</dbReference>
<dbReference type="GO" id="GO:0016887">
    <property type="term" value="F:ATP hydrolysis activity"/>
    <property type="evidence" value="ECO:0007669"/>
    <property type="project" value="RHEA"/>
</dbReference>
<dbReference type="GO" id="GO:0003677">
    <property type="term" value="F:DNA binding"/>
    <property type="evidence" value="ECO:0007669"/>
    <property type="project" value="UniProtKB-KW"/>
</dbReference>
<dbReference type="GO" id="GO:0003678">
    <property type="term" value="F:DNA helicase activity"/>
    <property type="evidence" value="ECO:0007669"/>
    <property type="project" value="InterPro"/>
</dbReference>
<dbReference type="GO" id="GO:0006289">
    <property type="term" value="P:nucleotide-excision repair"/>
    <property type="evidence" value="ECO:0007669"/>
    <property type="project" value="InterPro"/>
</dbReference>
<dbReference type="GO" id="GO:0010224">
    <property type="term" value="P:response to UV-B"/>
    <property type="evidence" value="ECO:0000270"/>
    <property type="project" value="TAIR"/>
</dbReference>
<dbReference type="GO" id="GO:0006367">
    <property type="term" value="P:transcription initiation at RNA polymerase II promoter"/>
    <property type="evidence" value="ECO:0007669"/>
    <property type="project" value="InterPro"/>
</dbReference>
<dbReference type="CDD" id="cd18029">
    <property type="entry name" value="DEXHc_XPB"/>
    <property type="match status" value="1"/>
</dbReference>
<dbReference type="CDD" id="cd18789">
    <property type="entry name" value="SF2_C_XPB"/>
    <property type="match status" value="1"/>
</dbReference>
<dbReference type="FunFam" id="3.40.50.300:FF:000077">
    <property type="entry name" value="Probable DNA repair helicase RAD25"/>
    <property type="match status" value="1"/>
</dbReference>
<dbReference type="FunFam" id="3.40.50.300:FF:000117">
    <property type="entry name" value="Putative DNA repair helicase rad25"/>
    <property type="match status" value="1"/>
</dbReference>
<dbReference type="Gene3D" id="3.40.50.300">
    <property type="entry name" value="P-loop containing nucleotide triphosphate hydrolases"/>
    <property type="match status" value="2"/>
</dbReference>
<dbReference type="InterPro" id="IPR050615">
    <property type="entry name" value="ATP-dep_DNA_Helicase"/>
</dbReference>
<dbReference type="InterPro" id="IPR032438">
    <property type="entry name" value="ERCC3_RAD25_C"/>
</dbReference>
<dbReference type="InterPro" id="IPR006935">
    <property type="entry name" value="Helicase/UvrB_N"/>
</dbReference>
<dbReference type="InterPro" id="IPR014001">
    <property type="entry name" value="Helicase_ATP-bd"/>
</dbReference>
<dbReference type="InterPro" id="IPR001650">
    <property type="entry name" value="Helicase_C-like"/>
</dbReference>
<dbReference type="InterPro" id="IPR027417">
    <property type="entry name" value="P-loop_NTPase"/>
</dbReference>
<dbReference type="InterPro" id="IPR001161">
    <property type="entry name" value="XPB/Ssl2"/>
</dbReference>
<dbReference type="InterPro" id="IPR032830">
    <property type="entry name" value="XPB/Ssl2_N"/>
</dbReference>
<dbReference type="NCBIfam" id="TIGR00603">
    <property type="entry name" value="rad25"/>
    <property type="match status" value="1"/>
</dbReference>
<dbReference type="PANTHER" id="PTHR11274:SF0">
    <property type="entry name" value="GENERAL TRANSCRIPTION AND DNA REPAIR FACTOR IIH HELICASE SUBUNIT XPB"/>
    <property type="match status" value="1"/>
</dbReference>
<dbReference type="PANTHER" id="PTHR11274">
    <property type="entry name" value="RAD25/XP-B DNA REPAIR HELICASE"/>
    <property type="match status" value="1"/>
</dbReference>
<dbReference type="Pfam" id="PF16203">
    <property type="entry name" value="ERCC3_RAD25_C"/>
    <property type="match status" value="1"/>
</dbReference>
<dbReference type="Pfam" id="PF13625">
    <property type="entry name" value="Helicase_C_3"/>
    <property type="match status" value="1"/>
</dbReference>
<dbReference type="Pfam" id="PF04851">
    <property type="entry name" value="ResIII"/>
    <property type="match status" value="1"/>
</dbReference>
<dbReference type="PRINTS" id="PR00851">
    <property type="entry name" value="XRODRMPGMNTB"/>
</dbReference>
<dbReference type="SMART" id="SM00487">
    <property type="entry name" value="DEXDc"/>
    <property type="match status" value="1"/>
</dbReference>
<dbReference type="SMART" id="SM00490">
    <property type="entry name" value="HELICc"/>
    <property type="match status" value="1"/>
</dbReference>
<dbReference type="SUPFAM" id="SSF52540">
    <property type="entry name" value="P-loop containing nucleoside triphosphate hydrolases"/>
    <property type="match status" value="2"/>
</dbReference>
<dbReference type="PROSITE" id="PS51192">
    <property type="entry name" value="HELICASE_ATP_BIND_1"/>
    <property type="match status" value="1"/>
</dbReference>
<dbReference type="PROSITE" id="PS51194">
    <property type="entry name" value="HELICASE_CTER"/>
    <property type="match status" value="1"/>
</dbReference>
<evidence type="ECO:0000250" key="1">
    <source>
        <dbReference type="UniProtKB" id="P19447"/>
    </source>
</evidence>
<evidence type="ECO:0000255" key="2"/>
<evidence type="ECO:0000255" key="3">
    <source>
        <dbReference type="PROSITE-ProRule" id="PRU00541"/>
    </source>
</evidence>
<evidence type="ECO:0000255" key="4">
    <source>
        <dbReference type="PROSITE-ProRule" id="PRU00542"/>
    </source>
</evidence>
<evidence type="ECO:0000256" key="5">
    <source>
        <dbReference type="SAM" id="MobiDB-lite"/>
    </source>
</evidence>
<evidence type="ECO:0000269" key="6">
    <source>
    </source>
</evidence>
<evidence type="ECO:0000305" key="7"/>
<evidence type="ECO:0000305" key="8">
    <source>
    </source>
</evidence>
<keyword id="KW-0067">ATP-binding</keyword>
<keyword id="KW-0227">DNA damage</keyword>
<keyword id="KW-0234">DNA repair</keyword>
<keyword id="KW-0238">DNA-binding</keyword>
<keyword id="KW-0347">Helicase</keyword>
<keyword id="KW-0378">Hydrolase</keyword>
<keyword id="KW-0413">Isomerase</keyword>
<keyword id="KW-0547">Nucleotide-binding</keyword>
<keyword id="KW-0539">Nucleus</keyword>
<keyword id="KW-1185">Reference proteome</keyword>
<keyword id="KW-0804">Transcription</keyword>
<keyword id="KW-0805">Transcription regulation</keyword>
<reference key="1">
    <citation type="journal article" date="2001" name="Plant J.">
        <title>The participation of AtXPB1, the XPB/RAD25 homologue gene from Arabidopsis thaliana, in DNA repair and plant development.</title>
        <authorList>
            <person name="Costa R.M.A."/>
            <person name="Morgante P.G."/>
            <person name="Berra C.M."/>
            <person name="Nakabashi M."/>
            <person name="Bruneau D."/>
            <person name="Bouchez D."/>
            <person name="Sweder K.S."/>
            <person name="Van Sluys M.-A."/>
            <person name="Menck C.F.M."/>
        </authorList>
    </citation>
    <scope>NUCLEOTIDE SEQUENCE [MRNA]</scope>
    <source>
        <strain>cv. Columbia</strain>
    </source>
</reference>
<reference key="2">
    <citation type="journal article" date="2005" name="Gene">
        <title>Functional XPB/RAD25 redundancy in Arabidopsis genome: characterization of AtXPB2 and expression analysis.</title>
        <authorList>
            <person name="Morgante P.G."/>
            <person name="Berra C.M."/>
            <person name="Nakabashi M."/>
            <person name="Costa R.M.A."/>
            <person name="Menck C.F.M."/>
            <person name="Van Sluys M.-A."/>
        </authorList>
    </citation>
    <scope>NUCLEOTIDE SEQUENCE [GENOMIC DNA]</scope>
    <scope>FUNCTION</scope>
    <scope>INDUCTION</scope>
    <source>
        <strain>cv. Landsberg erecta</strain>
        <strain>cv. Wassilewskija</strain>
    </source>
</reference>
<reference key="3">
    <citation type="journal article" date="1997" name="DNA Res.">
        <title>Structural analysis of Arabidopsis thaliana chromosome 5. II. Sequence features of the regions of 1,044,062 bp covered by thirteen physically assigned P1 clones.</title>
        <authorList>
            <person name="Kotani H."/>
            <person name="Nakamura Y."/>
            <person name="Sato S."/>
            <person name="Kaneko T."/>
            <person name="Asamizu E."/>
            <person name="Miyajima N."/>
            <person name="Tabata S."/>
        </authorList>
    </citation>
    <scope>NUCLEOTIDE SEQUENCE [LARGE SCALE GENOMIC DNA]</scope>
    <source>
        <strain>cv. Columbia</strain>
    </source>
</reference>
<reference key="4">
    <citation type="journal article" date="2017" name="Plant J.">
        <title>Araport11: a complete reannotation of the Arabidopsis thaliana reference genome.</title>
        <authorList>
            <person name="Cheng C.Y."/>
            <person name="Krishnakumar V."/>
            <person name="Chan A.P."/>
            <person name="Thibaud-Nissen F."/>
            <person name="Schobel S."/>
            <person name="Town C.D."/>
        </authorList>
    </citation>
    <scope>GENOME REANNOTATION</scope>
    <source>
        <strain>cv. Columbia</strain>
    </source>
</reference>
<reference key="5">
    <citation type="journal article" date="2005" name="Environ. Mol. Mutagen.">
        <title>Components of nucleotide excision repair and DNA damage tolerance in Arabidopsis thaliana.</title>
        <authorList>
            <person name="Kunz B.A."/>
            <person name="Anderson H.J."/>
            <person name="Osmond M.J."/>
            <person name="Vonarx E.J."/>
        </authorList>
    </citation>
    <scope>COMPONENT OF TFIIH CORE COMPLEX</scope>
    <scope>NOMENCLATURE</scope>
</reference>
<reference key="6">
    <citation type="journal article" date="2013" name="PLoS ONE">
        <title>Genome-wide comparative in silico analysis of the RNA helicase gene family in Zea mays and Glycine max: a comparison with Arabidopsis and Oryza sativa.</title>
        <authorList>
            <person name="Xu R."/>
            <person name="Zhang S."/>
            <person name="Huang J."/>
            <person name="Zheng C."/>
        </authorList>
    </citation>
    <scope>GENE FAMILY</scope>
</reference>
<sequence>MGNDERKRPTKKMKYGGKDDQKMKNIQNVEDYYDDADEDSRDGEGEEKRRDFTDLELKPDHGNRPLWACADGKIFLETFSPLYKQAYDFLIAIAEPVCRPESMHEYNLTPHSLYAAVSVGLETETIISVLNKLSKTKLPGEIIDFIHASTANYGKVKLVLKKNRYFIESPFPEVLKRLLSDDVINRARFTSEPYYGGDGFTIGKTSGELEAGPGELLNEAELAAAAEEKETHSFEIDPALVENVKQRCLPNALNYPMLEEYDFRNDNVNPDLDMELKPHAQPRPYQEKSLSKMFGNGRARSGIIVLPCGAGKSLVGVSAAARIKKSCLCLATNAVSVDQWAYQFKLWSTIKDDQICRFTSDSKERFRGNAGVVVTTYNMIAFGGKRSEEAEKIIEEMRNREWGLLLMDEVHVVPAHMFRKVISITKSHCKLGLTATLVREDEKITDLNFLIGPKLYEANWLDLVKGGFIANVQCAEVWCPMTKEFFAEYLKKENSKKKQALYVMNPNKFRACEFLIRFHEQQRGDKIIVFADNLFALTEYAMKLRKPMIYGATSHIERTKILEAFKTSKTVNTVFLSKVGDNSIDIPEANVIIQISSHAGSRRQEAQRLGRILRAKGKLEDRMAGGKEEYNAFFYSLVSTDTQEMYYSTKRQQFLIDQGYSFKVITSLPPPDAGSSLGYHSQEEQLSLLGKVLNAGDDMVGLEQLEEDTDGKALKTRRSMGSMSAMSGANGRVYMEYNSGRQKSGNQSKKPKDPTKRHNIFKKRYV</sequence>
<name>XPB2_ARATH</name>
<feature type="chain" id="PRO_0000101992" description="General transcription and DNA repair factor IIH helicase/translocase subunit XPB2">
    <location>
        <begin position="1"/>
        <end position="766"/>
    </location>
</feature>
<feature type="domain" description="Helicase ATP-binding" evidence="3">
    <location>
        <begin position="293"/>
        <end position="455"/>
    </location>
</feature>
<feature type="domain" description="Helicase C-terminal" evidence="4">
    <location>
        <begin position="510"/>
        <end position="676"/>
    </location>
</feature>
<feature type="region of interest" description="Disordered" evidence="5">
    <location>
        <begin position="1"/>
        <end position="56"/>
    </location>
</feature>
<feature type="region of interest" description="Disordered" evidence="5">
    <location>
        <begin position="739"/>
        <end position="766"/>
    </location>
</feature>
<feature type="short sequence motif" description="DEVH box">
    <location>
        <begin position="408"/>
        <end position="411"/>
    </location>
</feature>
<feature type="short sequence motif" description="Nuclear localization signal" evidence="2">
    <location>
        <begin position="749"/>
        <end position="765"/>
    </location>
</feature>
<feature type="compositionally biased region" description="Acidic residues" evidence="5">
    <location>
        <begin position="31"/>
        <end position="41"/>
    </location>
</feature>
<feature type="compositionally biased region" description="Basic and acidic residues" evidence="5">
    <location>
        <begin position="42"/>
        <end position="56"/>
    </location>
</feature>
<feature type="compositionally biased region" description="Polar residues" evidence="5">
    <location>
        <begin position="739"/>
        <end position="748"/>
    </location>
</feature>
<feature type="compositionally biased region" description="Basic residues" evidence="5">
    <location>
        <begin position="757"/>
        <end position="766"/>
    </location>
</feature>
<feature type="binding site" evidence="3">
    <location>
        <begin position="306"/>
        <end position="313"/>
    </location>
    <ligand>
        <name>ATP</name>
        <dbReference type="ChEBI" id="CHEBI:30616"/>
    </ligand>
</feature>
<comment type="function">
    <text evidence="1">ATP-dependent 3'-5' DNA helicase/translocase; binds dsDNA rather than ssDNA, unzipping it in a translocase rather than classical helicase activity (By similarity). Component of the general transcription and DNA repair factor IIH (TFIIH) core complex. When complexed to CDK-activating kinase (CAK), involved in RNA transcription by RNA polymerase II. The ATPase activity of XPB/ERCC3, but not its helicase activity, is required for DNA opening; it may wrap around the damaged DNA wedging it open, causing localized melting and twisting that allows XPD/ERCC2 helicase to anchor. The ATP-dependent helicase activity of XPB/ERCC3 may be required for promoter escape. Also involved in transcription-coupled nucleotide excision repair (NER) of damaged DNA. In NER, TFIIH acts by opening DNA around the lesion to allow the excision of the damaged oligonucleotide and its replacement by a new DNA fragment. The structure of the TFIIH transcription complex differs from the NER-TFIIH complex (By similarity). Partially complements UV sensitivity of a yeast SSL2 mutation (PubMed:15656976).</text>
</comment>
<comment type="catalytic activity">
    <reaction evidence="1">
        <text>Couples ATP hydrolysis with the unwinding of duplex DNA by translocating in the 3'-5' direction.</text>
        <dbReference type="EC" id="5.6.2.4"/>
    </reaction>
</comment>
<comment type="catalytic activity">
    <reaction evidence="1">
        <text>ATP + H2O = ADP + phosphate + H(+)</text>
        <dbReference type="Rhea" id="RHEA:13065"/>
        <dbReference type="ChEBI" id="CHEBI:15377"/>
        <dbReference type="ChEBI" id="CHEBI:15378"/>
        <dbReference type="ChEBI" id="CHEBI:30616"/>
        <dbReference type="ChEBI" id="CHEBI:43474"/>
        <dbReference type="ChEBI" id="CHEBI:456216"/>
        <dbReference type="EC" id="5.6.2.4"/>
    </reaction>
</comment>
<comment type="subunit">
    <text evidence="1 8">Component of the 7-subunit TFIIH core complex composed of XPB, XPD, TFB1/GTF2H1, GTF2H2/P44, TFB4/GTF2H3, TFB2/GTF2H4 and TFB5/GTF2H5, which is active in NER. The core complex associates with the 3-subunit CDK-activating kinase (CAK) module composed of CYCH1/cyclin H1, CDKD and MAT1/At4g30820 to form the 10-subunit holoenzyme (holo-TFIIH) active in transcription.</text>
</comment>
<comment type="subcellular location">
    <subcellularLocation>
        <location evidence="7">Nucleus</location>
    </subcellularLocation>
</comment>
<comment type="tissue specificity">
    <text evidence="6">Expressed ubiquitously (PubMed:15656976).</text>
</comment>
<comment type="developmental stage">
    <text evidence="6">More highly transcribed in 10-day-old seedlings than 3-day-old seedlings (PubMed:15656976).</text>
</comment>
<comment type="induction">
    <text evidence="6">Higher transcription in light than in dark (PubMed:15656976).</text>
</comment>
<comment type="similarity">
    <text evidence="7">Belongs to the helicase family. RAD25/XPB subfamily.</text>
</comment>
<comment type="sequence caution" evidence="7">
    <conflict type="erroneous gene model prediction">
        <sequence resource="EMBL-CDS" id="BAB08508"/>
    </conflict>
</comment>